<keyword id="KW-0963">Cytoplasm</keyword>
<keyword id="KW-0460">Magnesium</keyword>
<keyword id="KW-0479">Metal-binding</keyword>
<keyword id="KW-0548">Nucleotidyltransferase</keyword>
<keyword id="KW-0694">RNA-binding</keyword>
<keyword id="KW-0808">Transferase</keyword>
<accession>Q92C23</accession>
<evidence type="ECO:0000255" key="1">
    <source>
        <dbReference type="HAMAP-Rule" id="MF_01595"/>
    </source>
</evidence>
<evidence type="ECO:0000256" key="2">
    <source>
        <dbReference type="SAM" id="MobiDB-lite"/>
    </source>
</evidence>
<gene>
    <name evidence="1" type="primary">pnp</name>
    <name type="ordered locus">lin1368</name>
</gene>
<reference key="1">
    <citation type="journal article" date="2001" name="Science">
        <title>Comparative genomics of Listeria species.</title>
        <authorList>
            <person name="Glaser P."/>
            <person name="Frangeul L."/>
            <person name="Buchrieser C."/>
            <person name="Rusniok C."/>
            <person name="Amend A."/>
            <person name="Baquero F."/>
            <person name="Berche P."/>
            <person name="Bloecker H."/>
            <person name="Brandt P."/>
            <person name="Chakraborty T."/>
            <person name="Charbit A."/>
            <person name="Chetouani F."/>
            <person name="Couve E."/>
            <person name="de Daruvar A."/>
            <person name="Dehoux P."/>
            <person name="Domann E."/>
            <person name="Dominguez-Bernal G."/>
            <person name="Duchaud E."/>
            <person name="Durant L."/>
            <person name="Dussurget O."/>
            <person name="Entian K.-D."/>
            <person name="Fsihi H."/>
            <person name="Garcia-del Portillo F."/>
            <person name="Garrido P."/>
            <person name="Gautier L."/>
            <person name="Goebel W."/>
            <person name="Gomez-Lopez N."/>
            <person name="Hain T."/>
            <person name="Hauf J."/>
            <person name="Jackson D."/>
            <person name="Jones L.-M."/>
            <person name="Kaerst U."/>
            <person name="Kreft J."/>
            <person name="Kuhn M."/>
            <person name="Kunst F."/>
            <person name="Kurapkat G."/>
            <person name="Madueno E."/>
            <person name="Maitournam A."/>
            <person name="Mata Vicente J."/>
            <person name="Ng E."/>
            <person name="Nedjari H."/>
            <person name="Nordsiek G."/>
            <person name="Novella S."/>
            <person name="de Pablos B."/>
            <person name="Perez-Diaz J.-C."/>
            <person name="Purcell R."/>
            <person name="Remmel B."/>
            <person name="Rose M."/>
            <person name="Schlueter T."/>
            <person name="Simoes N."/>
            <person name="Tierrez A."/>
            <person name="Vazquez-Boland J.-A."/>
            <person name="Voss H."/>
            <person name="Wehland J."/>
            <person name="Cossart P."/>
        </authorList>
    </citation>
    <scope>NUCLEOTIDE SEQUENCE [LARGE SCALE GENOMIC DNA]</scope>
    <source>
        <strain>ATCC BAA-680 / CLIP 11262</strain>
    </source>
</reference>
<name>PNP_LISIN</name>
<organism>
    <name type="scientific">Listeria innocua serovar 6a (strain ATCC BAA-680 / CLIP 11262)</name>
    <dbReference type="NCBI Taxonomy" id="272626"/>
    <lineage>
        <taxon>Bacteria</taxon>
        <taxon>Bacillati</taxon>
        <taxon>Bacillota</taxon>
        <taxon>Bacilli</taxon>
        <taxon>Bacillales</taxon>
        <taxon>Listeriaceae</taxon>
        <taxon>Listeria</taxon>
    </lineage>
</organism>
<dbReference type="EC" id="2.7.7.8" evidence="1"/>
<dbReference type="EMBL" id="AL596168">
    <property type="protein sequence ID" value="CAC96599.1"/>
    <property type="molecule type" value="Genomic_DNA"/>
</dbReference>
<dbReference type="PIR" id="AG1603">
    <property type="entry name" value="AG1603"/>
</dbReference>
<dbReference type="RefSeq" id="WP_003771683.1">
    <property type="nucleotide sequence ID" value="NC_003212.1"/>
</dbReference>
<dbReference type="SMR" id="Q92C23"/>
<dbReference type="STRING" id="272626.gene:17565699"/>
<dbReference type="DNASU" id="1129961"/>
<dbReference type="GeneID" id="93234748"/>
<dbReference type="KEGG" id="lin:pnpA"/>
<dbReference type="eggNOG" id="COG1185">
    <property type="taxonomic scope" value="Bacteria"/>
</dbReference>
<dbReference type="HOGENOM" id="CLU_004217_2_2_9"/>
<dbReference type="OrthoDB" id="9804305at2"/>
<dbReference type="Proteomes" id="UP000002513">
    <property type="component" value="Chromosome"/>
</dbReference>
<dbReference type="GO" id="GO:0005829">
    <property type="term" value="C:cytosol"/>
    <property type="evidence" value="ECO:0007669"/>
    <property type="project" value="TreeGrafter"/>
</dbReference>
<dbReference type="GO" id="GO:0000175">
    <property type="term" value="F:3'-5'-RNA exonuclease activity"/>
    <property type="evidence" value="ECO:0007669"/>
    <property type="project" value="TreeGrafter"/>
</dbReference>
<dbReference type="GO" id="GO:0000287">
    <property type="term" value="F:magnesium ion binding"/>
    <property type="evidence" value="ECO:0007669"/>
    <property type="project" value="UniProtKB-UniRule"/>
</dbReference>
<dbReference type="GO" id="GO:0004654">
    <property type="term" value="F:polyribonucleotide nucleotidyltransferase activity"/>
    <property type="evidence" value="ECO:0007669"/>
    <property type="project" value="UniProtKB-UniRule"/>
</dbReference>
<dbReference type="GO" id="GO:0003723">
    <property type="term" value="F:RNA binding"/>
    <property type="evidence" value="ECO:0007669"/>
    <property type="project" value="UniProtKB-UniRule"/>
</dbReference>
<dbReference type="GO" id="GO:0006402">
    <property type="term" value="P:mRNA catabolic process"/>
    <property type="evidence" value="ECO:0007669"/>
    <property type="project" value="UniProtKB-UniRule"/>
</dbReference>
<dbReference type="GO" id="GO:0006396">
    <property type="term" value="P:RNA processing"/>
    <property type="evidence" value="ECO:0007669"/>
    <property type="project" value="InterPro"/>
</dbReference>
<dbReference type="CDD" id="cd02393">
    <property type="entry name" value="KH-I_PNPase"/>
    <property type="match status" value="1"/>
</dbReference>
<dbReference type="CDD" id="cd11363">
    <property type="entry name" value="RNase_PH_PNPase_1"/>
    <property type="match status" value="1"/>
</dbReference>
<dbReference type="CDD" id="cd11364">
    <property type="entry name" value="RNase_PH_PNPase_2"/>
    <property type="match status" value="1"/>
</dbReference>
<dbReference type="CDD" id="cd04472">
    <property type="entry name" value="S1_PNPase"/>
    <property type="match status" value="1"/>
</dbReference>
<dbReference type="FunFam" id="2.40.50.140:FF:000023">
    <property type="entry name" value="Polyribonucleotide nucleotidyltransferase"/>
    <property type="match status" value="1"/>
</dbReference>
<dbReference type="FunFam" id="3.30.1370.10:FF:000001">
    <property type="entry name" value="Polyribonucleotide nucleotidyltransferase"/>
    <property type="match status" value="1"/>
</dbReference>
<dbReference type="FunFam" id="3.30.230.70:FF:000001">
    <property type="entry name" value="Polyribonucleotide nucleotidyltransferase"/>
    <property type="match status" value="1"/>
</dbReference>
<dbReference type="FunFam" id="3.30.230.70:FF:000002">
    <property type="entry name" value="Polyribonucleotide nucleotidyltransferase"/>
    <property type="match status" value="1"/>
</dbReference>
<dbReference type="Gene3D" id="3.30.230.70">
    <property type="entry name" value="GHMP Kinase, N-terminal domain"/>
    <property type="match status" value="2"/>
</dbReference>
<dbReference type="Gene3D" id="3.30.1370.10">
    <property type="entry name" value="K Homology domain, type 1"/>
    <property type="match status" value="1"/>
</dbReference>
<dbReference type="Gene3D" id="2.40.50.140">
    <property type="entry name" value="Nucleic acid-binding proteins"/>
    <property type="match status" value="1"/>
</dbReference>
<dbReference type="HAMAP" id="MF_01595">
    <property type="entry name" value="PNPase"/>
    <property type="match status" value="1"/>
</dbReference>
<dbReference type="InterPro" id="IPR001247">
    <property type="entry name" value="ExoRNase_PH_dom1"/>
</dbReference>
<dbReference type="InterPro" id="IPR015847">
    <property type="entry name" value="ExoRNase_PH_dom2"/>
</dbReference>
<dbReference type="InterPro" id="IPR036345">
    <property type="entry name" value="ExoRNase_PH_dom2_sf"/>
</dbReference>
<dbReference type="InterPro" id="IPR004087">
    <property type="entry name" value="KH_dom"/>
</dbReference>
<dbReference type="InterPro" id="IPR004088">
    <property type="entry name" value="KH_dom_type_1"/>
</dbReference>
<dbReference type="InterPro" id="IPR036612">
    <property type="entry name" value="KH_dom_type_1_sf"/>
</dbReference>
<dbReference type="InterPro" id="IPR012340">
    <property type="entry name" value="NA-bd_OB-fold"/>
</dbReference>
<dbReference type="InterPro" id="IPR012162">
    <property type="entry name" value="PNPase"/>
</dbReference>
<dbReference type="InterPro" id="IPR027408">
    <property type="entry name" value="PNPase/RNase_PH_dom_sf"/>
</dbReference>
<dbReference type="InterPro" id="IPR015848">
    <property type="entry name" value="PNPase_PH_RNA-bd_bac/org-type"/>
</dbReference>
<dbReference type="InterPro" id="IPR036456">
    <property type="entry name" value="PNPase_PH_RNA-bd_sf"/>
</dbReference>
<dbReference type="InterPro" id="IPR020568">
    <property type="entry name" value="Ribosomal_Su5_D2-typ_SF"/>
</dbReference>
<dbReference type="InterPro" id="IPR003029">
    <property type="entry name" value="S1_domain"/>
</dbReference>
<dbReference type="NCBIfam" id="TIGR03591">
    <property type="entry name" value="polynuc_phos"/>
    <property type="match status" value="1"/>
</dbReference>
<dbReference type="NCBIfam" id="NF008805">
    <property type="entry name" value="PRK11824.1"/>
    <property type="match status" value="1"/>
</dbReference>
<dbReference type="PANTHER" id="PTHR11252">
    <property type="entry name" value="POLYRIBONUCLEOTIDE NUCLEOTIDYLTRANSFERASE"/>
    <property type="match status" value="1"/>
</dbReference>
<dbReference type="PANTHER" id="PTHR11252:SF0">
    <property type="entry name" value="POLYRIBONUCLEOTIDE NUCLEOTIDYLTRANSFERASE 1, MITOCHONDRIAL"/>
    <property type="match status" value="1"/>
</dbReference>
<dbReference type="Pfam" id="PF00013">
    <property type="entry name" value="KH_1"/>
    <property type="match status" value="1"/>
</dbReference>
<dbReference type="Pfam" id="PF03726">
    <property type="entry name" value="PNPase"/>
    <property type="match status" value="1"/>
</dbReference>
<dbReference type="Pfam" id="PF01138">
    <property type="entry name" value="RNase_PH"/>
    <property type="match status" value="2"/>
</dbReference>
<dbReference type="Pfam" id="PF03725">
    <property type="entry name" value="RNase_PH_C"/>
    <property type="match status" value="2"/>
</dbReference>
<dbReference type="Pfam" id="PF00575">
    <property type="entry name" value="S1"/>
    <property type="match status" value="1"/>
</dbReference>
<dbReference type="PIRSF" id="PIRSF005499">
    <property type="entry name" value="PNPase"/>
    <property type="match status" value="1"/>
</dbReference>
<dbReference type="SMART" id="SM00322">
    <property type="entry name" value="KH"/>
    <property type="match status" value="1"/>
</dbReference>
<dbReference type="SMART" id="SM00316">
    <property type="entry name" value="S1"/>
    <property type="match status" value="1"/>
</dbReference>
<dbReference type="SUPFAM" id="SSF54791">
    <property type="entry name" value="Eukaryotic type KH-domain (KH-domain type I)"/>
    <property type="match status" value="1"/>
</dbReference>
<dbReference type="SUPFAM" id="SSF50249">
    <property type="entry name" value="Nucleic acid-binding proteins"/>
    <property type="match status" value="1"/>
</dbReference>
<dbReference type="SUPFAM" id="SSF46915">
    <property type="entry name" value="Polynucleotide phosphorylase/guanosine pentaphosphate synthase (PNPase/GPSI), domain 3"/>
    <property type="match status" value="1"/>
</dbReference>
<dbReference type="SUPFAM" id="SSF55666">
    <property type="entry name" value="Ribonuclease PH domain 2-like"/>
    <property type="match status" value="2"/>
</dbReference>
<dbReference type="SUPFAM" id="SSF54211">
    <property type="entry name" value="Ribosomal protein S5 domain 2-like"/>
    <property type="match status" value="2"/>
</dbReference>
<dbReference type="PROSITE" id="PS50084">
    <property type="entry name" value="KH_TYPE_1"/>
    <property type="match status" value="1"/>
</dbReference>
<dbReference type="PROSITE" id="PS50126">
    <property type="entry name" value="S1"/>
    <property type="match status" value="1"/>
</dbReference>
<feature type="chain" id="PRO_0000329701" description="Polyribonucleotide nucleotidyltransferase">
    <location>
        <begin position="1"/>
        <end position="723"/>
    </location>
</feature>
<feature type="domain" description="KH" evidence="1">
    <location>
        <begin position="555"/>
        <end position="614"/>
    </location>
</feature>
<feature type="domain" description="S1 motif" evidence="1">
    <location>
        <begin position="624"/>
        <end position="692"/>
    </location>
</feature>
<feature type="region of interest" description="Disordered" evidence="2">
    <location>
        <begin position="692"/>
        <end position="723"/>
    </location>
</feature>
<feature type="compositionally biased region" description="Basic and acidic residues" evidence="2">
    <location>
        <begin position="693"/>
        <end position="723"/>
    </location>
</feature>
<feature type="binding site" evidence="1">
    <location>
        <position position="488"/>
    </location>
    <ligand>
        <name>Mg(2+)</name>
        <dbReference type="ChEBI" id="CHEBI:18420"/>
    </ligand>
</feature>
<feature type="binding site" evidence="1">
    <location>
        <position position="494"/>
    </location>
    <ligand>
        <name>Mg(2+)</name>
        <dbReference type="ChEBI" id="CHEBI:18420"/>
    </ligand>
</feature>
<protein>
    <recommendedName>
        <fullName evidence="1">Polyribonucleotide nucleotidyltransferase</fullName>
        <ecNumber evidence="1">2.7.7.8</ecNumber>
    </recommendedName>
    <alternativeName>
        <fullName evidence="1">Polynucleotide phosphorylase</fullName>
        <shortName evidence="1">PNPase</shortName>
    </alternativeName>
</protein>
<sequence length="723" mass="79607">MSEKQVFSTEWAGKTLSVEVGQLAKQASGAALIRYGDTVVLTAAVGSKKPRPGDFFPLTVNYEEKMYSVGKVPGGFLKREGRPSDRATLTARLIDRPIRPLFAEGFRNEVQITSTVFSVDQDCSPEMAAMLGSSVALVISDIPFEGPIAGVDVGRIDGKYVINPTIEQAEKSDISLTVAGTYDAINMVEAGAKEVSEEAMLEAIMFGHEEIKRLCEFQQQIIAAVGKEKREIELFVSDPELEAEVKAASEGKMKAAIKTEEKKAREAAIEEVKEEILESYKAKELENEAEILGEVAHILEMIEKDEMRRLISQDKIRPDGRKVNEIRPLSSEVGMLPRVHGSGLFTRGQTQALSVCTLAPLREHQIIDGLGTEEYKRFMHHYNFPQFSVGETGPRRAPGRREIGHGALGERALQYVIPSEEEFPYTIRLVSEVLESNGSSSQASICGSTLAMLDAGVPIKAPVAGIAMGLVKLGDDYTILSDIQGMEDHFGDMDFKVAGTKDGITALQMDIKIDGLSRQILDEALTQAKEGRLHILEHLTSTISEPREELSAYAPKIITLNIKPEKIKDVIGPGGKQINAIIEETGVKIDIEQDGTVYIASQDQAMNRKAIAIIEDIVREVEVGEVYTGKVRRIEKFGAFVELFKGTDGLVHISELAHERVGKVEDILKLGDEVTVKVIEVDHQGRVNLSRKALLEKKEQPEGDKKPQAEKKFYPKTKKPESK</sequence>
<proteinExistence type="inferred from homology"/>
<comment type="function">
    <text evidence="1">Involved in mRNA degradation. Catalyzes the phosphorolysis of single-stranded polyribonucleotides processively in the 3'- to 5'-direction.</text>
</comment>
<comment type="catalytic activity">
    <reaction evidence="1">
        <text>RNA(n+1) + phosphate = RNA(n) + a ribonucleoside 5'-diphosphate</text>
        <dbReference type="Rhea" id="RHEA:22096"/>
        <dbReference type="Rhea" id="RHEA-COMP:14527"/>
        <dbReference type="Rhea" id="RHEA-COMP:17342"/>
        <dbReference type="ChEBI" id="CHEBI:43474"/>
        <dbReference type="ChEBI" id="CHEBI:57930"/>
        <dbReference type="ChEBI" id="CHEBI:140395"/>
        <dbReference type="EC" id="2.7.7.8"/>
    </reaction>
</comment>
<comment type="cofactor">
    <cofactor evidence="1">
        <name>Mg(2+)</name>
        <dbReference type="ChEBI" id="CHEBI:18420"/>
    </cofactor>
</comment>
<comment type="subcellular location">
    <subcellularLocation>
        <location evidence="1">Cytoplasm</location>
    </subcellularLocation>
</comment>
<comment type="similarity">
    <text evidence="1">Belongs to the polyribonucleotide nucleotidyltransferase family.</text>
</comment>